<gene>
    <name evidence="1" type="primary">noc</name>
    <name type="ordered locus">Bcer98_4021</name>
</gene>
<reference key="1">
    <citation type="journal article" date="2008" name="Chem. Biol. Interact.">
        <title>Extending the Bacillus cereus group genomics to putative food-borne pathogens of different toxicity.</title>
        <authorList>
            <person name="Lapidus A."/>
            <person name="Goltsman E."/>
            <person name="Auger S."/>
            <person name="Galleron N."/>
            <person name="Segurens B."/>
            <person name="Dossat C."/>
            <person name="Land M.L."/>
            <person name="Broussolle V."/>
            <person name="Brillard J."/>
            <person name="Guinebretiere M.-H."/>
            <person name="Sanchis V."/>
            <person name="Nguen-the C."/>
            <person name="Lereclus D."/>
            <person name="Richardson P."/>
            <person name="Wincker P."/>
            <person name="Weissenbach J."/>
            <person name="Ehrlich S.D."/>
            <person name="Sorokin A."/>
        </authorList>
    </citation>
    <scope>NUCLEOTIDE SEQUENCE [LARGE SCALE GENOMIC DNA]</scope>
    <source>
        <strain>DSM 22905 / CIP 110041 / 391-98 / NVH 391-98</strain>
    </source>
</reference>
<protein>
    <recommendedName>
        <fullName evidence="1">Nucleoid occlusion protein</fullName>
        <shortName evidence="1">Noc</shortName>
    </recommendedName>
</protein>
<evidence type="ECO:0000255" key="1">
    <source>
        <dbReference type="HAMAP-Rule" id="MF_02015"/>
    </source>
</evidence>
<comment type="function">
    <text evidence="1">Effects nucleoid occlusion by binding relatively nonspecifically to DNA and preventing the assembly of the division machinery in the vicinity of the nucleoid, especially under conditions that disturb the cell cycle. It helps to coordinate cell division and chromosome segregation by preventing the formation of the Z ring through the nucleoid, which would cause chromosome breakage.</text>
</comment>
<comment type="subcellular location">
    <subcellularLocation>
        <location evidence="1">Cytoplasm</location>
        <location evidence="1">Nucleoid</location>
    </subcellularLocation>
</comment>
<comment type="similarity">
    <text evidence="1">Belongs to the ParB family.</text>
</comment>
<proteinExistence type="inferred from homology"/>
<dbReference type="EMBL" id="CP000764">
    <property type="protein sequence ID" value="ABS24202.1"/>
    <property type="molecule type" value="Genomic_DNA"/>
</dbReference>
<dbReference type="RefSeq" id="WP_012096466.1">
    <property type="nucleotide sequence ID" value="NC_009674.1"/>
</dbReference>
<dbReference type="SMR" id="A7GVP4"/>
<dbReference type="STRING" id="315749.Bcer98_4021"/>
<dbReference type="GeneID" id="33899251"/>
<dbReference type="KEGG" id="bcy:Bcer98_4021"/>
<dbReference type="eggNOG" id="COG1475">
    <property type="taxonomic scope" value="Bacteria"/>
</dbReference>
<dbReference type="HOGENOM" id="CLU_023853_0_1_9"/>
<dbReference type="OrthoDB" id="9802051at2"/>
<dbReference type="Proteomes" id="UP000002300">
    <property type="component" value="Chromosome"/>
</dbReference>
<dbReference type="GO" id="GO:0005694">
    <property type="term" value="C:chromosome"/>
    <property type="evidence" value="ECO:0007669"/>
    <property type="project" value="TreeGrafter"/>
</dbReference>
<dbReference type="GO" id="GO:0005737">
    <property type="term" value="C:cytoplasm"/>
    <property type="evidence" value="ECO:0007669"/>
    <property type="project" value="UniProtKB-UniRule"/>
</dbReference>
<dbReference type="GO" id="GO:0009295">
    <property type="term" value="C:nucleoid"/>
    <property type="evidence" value="ECO:0007669"/>
    <property type="project" value="UniProtKB-SubCell"/>
</dbReference>
<dbReference type="GO" id="GO:0003677">
    <property type="term" value="F:DNA binding"/>
    <property type="evidence" value="ECO:0007669"/>
    <property type="project" value="UniProtKB-UniRule"/>
</dbReference>
<dbReference type="GO" id="GO:0007059">
    <property type="term" value="P:chromosome segregation"/>
    <property type="evidence" value="ECO:0007669"/>
    <property type="project" value="TreeGrafter"/>
</dbReference>
<dbReference type="GO" id="GO:0000917">
    <property type="term" value="P:division septum assembly"/>
    <property type="evidence" value="ECO:0007669"/>
    <property type="project" value="UniProtKB-KW"/>
</dbReference>
<dbReference type="GO" id="GO:0045881">
    <property type="term" value="P:positive regulation of sporulation resulting in formation of a cellular spore"/>
    <property type="evidence" value="ECO:0007669"/>
    <property type="project" value="TreeGrafter"/>
</dbReference>
<dbReference type="CDD" id="cd16393">
    <property type="entry name" value="SPO0J_N"/>
    <property type="match status" value="1"/>
</dbReference>
<dbReference type="FunFam" id="1.10.10.2830:FF:000001">
    <property type="entry name" value="Chromosome partitioning protein ParB"/>
    <property type="match status" value="1"/>
</dbReference>
<dbReference type="FunFam" id="3.90.1530.30:FF:000001">
    <property type="entry name" value="Chromosome partitioning protein ParB"/>
    <property type="match status" value="1"/>
</dbReference>
<dbReference type="Gene3D" id="1.10.10.2830">
    <property type="match status" value="1"/>
</dbReference>
<dbReference type="Gene3D" id="3.90.1530.30">
    <property type="match status" value="1"/>
</dbReference>
<dbReference type="HAMAP" id="MF_02015">
    <property type="entry name" value="ParB_Noc"/>
    <property type="match status" value="1"/>
</dbReference>
<dbReference type="InterPro" id="IPR050336">
    <property type="entry name" value="Chromosome_partition/occlusion"/>
</dbReference>
<dbReference type="InterPro" id="IPR041468">
    <property type="entry name" value="HTH_ParB/Spo0J"/>
</dbReference>
<dbReference type="InterPro" id="IPR023705">
    <property type="entry name" value="Nucleoid_occlusion_protein"/>
</dbReference>
<dbReference type="InterPro" id="IPR004437">
    <property type="entry name" value="ParB/RepB/Spo0J"/>
</dbReference>
<dbReference type="InterPro" id="IPR003115">
    <property type="entry name" value="ParB/Sulfiredoxin_dom"/>
</dbReference>
<dbReference type="InterPro" id="IPR036086">
    <property type="entry name" value="ParB/Sulfiredoxin_sf"/>
</dbReference>
<dbReference type="NCBIfam" id="TIGR04285">
    <property type="entry name" value="nucleoid_noc"/>
    <property type="match status" value="1"/>
</dbReference>
<dbReference type="NCBIfam" id="TIGR00180">
    <property type="entry name" value="parB_part"/>
    <property type="match status" value="1"/>
</dbReference>
<dbReference type="PANTHER" id="PTHR33375">
    <property type="entry name" value="CHROMOSOME-PARTITIONING PROTEIN PARB-RELATED"/>
    <property type="match status" value="1"/>
</dbReference>
<dbReference type="PANTHER" id="PTHR33375:SF8">
    <property type="entry name" value="NUCLEOID OCCLUSION PROTEIN"/>
    <property type="match status" value="1"/>
</dbReference>
<dbReference type="Pfam" id="PF17762">
    <property type="entry name" value="HTH_ParB"/>
    <property type="match status" value="1"/>
</dbReference>
<dbReference type="Pfam" id="PF02195">
    <property type="entry name" value="ParBc"/>
    <property type="match status" value="1"/>
</dbReference>
<dbReference type="SMART" id="SM00470">
    <property type="entry name" value="ParB"/>
    <property type="match status" value="1"/>
</dbReference>
<dbReference type="SUPFAM" id="SSF110849">
    <property type="entry name" value="ParB/Sulfiredoxin"/>
    <property type="match status" value="1"/>
</dbReference>
<accession>A7GVP4</accession>
<organism>
    <name type="scientific">Bacillus cytotoxicus (strain DSM 22905 / CIP 110041 / 391-98 / NVH 391-98)</name>
    <dbReference type="NCBI Taxonomy" id="315749"/>
    <lineage>
        <taxon>Bacteria</taxon>
        <taxon>Bacillati</taxon>
        <taxon>Bacillota</taxon>
        <taxon>Bacilli</taxon>
        <taxon>Bacillales</taxon>
        <taxon>Bacillaceae</taxon>
        <taxon>Bacillus</taxon>
        <taxon>Bacillus cereus group</taxon>
    </lineage>
</organism>
<feature type="chain" id="PRO_0000346621" description="Nucleoid occlusion protein">
    <location>
        <begin position="1"/>
        <end position="290"/>
    </location>
</feature>
<feature type="DNA-binding region" description="H-T-H motif" evidence="1">
    <location>
        <begin position="153"/>
        <end position="172"/>
    </location>
</feature>
<sequence>MKNTFSRLFGFGDKMSELEIQNESHEDINKKIHEEIHEIPIANIIPNRYQPRTVFDDARIDELALTIRTHGLIQPIVVRQYEEDCYEIIAGERRFRAATKLGWEKVPAIIKNLNDTETASVALIENLQREELTAIEEAVAYQKLIELHNLTQEALAQRLGKGQSTIANKLRLLKLPEDIKRSLLEKSITERHARALIPLKNEELQLKVLQEIVEKQLNVKQTEERIAKLLEEVKPKRKAKKKAVSRDMRIAMNTIRQSLQMVAKSGLNVNSEEEEFDEYYQITIKIPKKK</sequence>
<keyword id="KW-0131">Cell cycle</keyword>
<keyword id="KW-0132">Cell division</keyword>
<keyword id="KW-0963">Cytoplasm</keyword>
<keyword id="KW-0238">DNA-binding</keyword>
<keyword id="KW-0717">Septation</keyword>
<name>NOC_BACCN</name>